<feature type="chain" id="PRO_1000126847" description="Large ribosomal subunit protein bL31B">
    <location>
        <begin position="1"/>
        <end position="80"/>
    </location>
</feature>
<sequence>MKPEIHPIYREVVFHDVTSNFKFLTRSTMSTKETTLWEDGREYPLVKVEISSASHPFYTGKHKLVDTSGRIDKFKKRYAR</sequence>
<dbReference type="EMBL" id="CP000941">
    <property type="protein sequence ID" value="ACA11859.1"/>
    <property type="molecule type" value="Genomic_DNA"/>
</dbReference>
<dbReference type="RefSeq" id="WP_004083672.1">
    <property type="nucleotide sequence ID" value="NC_010513.1"/>
</dbReference>
<dbReference type="SMR" id="B0U6Z3"/>
<dbReference type="KEGG" id="xfm:Xfasm12_0873"/>
<dbReference type="HOGENOM" id="CLU_114306_2_2_6"/>
<dbReference type="GO" id="GO:1990904">
    <property type="term" value="C:ribonucleoprotein complex"/>
    <property type="evidence" value="ECO:0007669"/>
    <property type="project" value="UniProtKB-KW"/>
</dbReference>
<dbReference type="GO" id="GO:0005840">
    <property type="term" value="C:ribosome"/>
    <property type="evidence" value="ECO:0007669"/>
    <property type="project" value="UniProtKB-KW"/>
</dbReference>
<dbReference type="GO" id="GO:0003735">
    <property type="term" value="F:structural constituent of ribosome"/>
    <property type="evidence" value="ECO:0007669"/>
    <property type="project" value="InterPro"/>
</dbReference>
<dbReference type="GO" id="GO:0006412">
    <property type="term" value="P:translation"/>
    <property type="evidence" value="ECO:0007669"/>
    <property type="project" value="UniProtKB-UniRule"/>
</dbReference>
<dbReference type="Gene3D" id="4.10.830.30">
    <property type="entry name" value="Ribosomal protein L31"/>
    <property type="match status" value="1"/>
</dbReference>
<dbReference type="HAMAP" id="MF_00502">
    <property type="entry name" value="Ribosomal_bL31_2"/>
    <property type="match status" value="1"/>
</dbReference>
<dbReference type="InterPro" id="IPR034704">
    <property type="entry name" value="Ribosomal_bL28/bL31-like_sf"/>
</dbReference>
<dbReference type="InterPro" id="IPR002150">
    <property type="entry name" value="Ribosomal_bL31"/>
</dbReference>
<dbReference type="InterPro" id="IPR027493">
    <property type="entry name" value="Ribosomal_bL31_B"/>
</dbReference>
<dbReference type="InterPro" id="IPR042105">
    <property type="entry name" value="Ribosomal_bL31_sf"/>
</dbReference>
<dbReference type="NCBIfam" id="TIGR00105">
    <property type="entry name" value="L31"/>
    <property type="match status" value="1"/>
</dbReference>
<dbReference type="NCBIfam" id="NF002462">
    <property type="entry name" value="PRK01678.1"/>
    <property type="match status" value="1"/>
</dbReference>
<dbReference type="PANTHER" id="PTHR33280">
    <property type="entry name" value="50S RIBOSOMAL PROTEIN L31, CHLOROPLASTIC"/>
    <property type="match status" value="1"/>
</dbReference>
<dbReference type="PANTHER" id="PTHR33280:SF6">
    <property type="entry name" value="LARGE RIBOSOMAL SUBUNIT PROTEIN BL31A"/>
    <property type="match status" value="1"/>
</dbReference>
<dbReference type="Pfam" id="PF01197">
    <property type="entry name" value="Ribosomal_L31"/>
    <property type="match status" value="1"/>
</dbReference>
<dbReference type="PRINTS" id="PR01249">
    <property type="entry name" value="RIBOSOMALL31"/>
</dbReference>
<dbReference type="SUPFAM" id="SSF143800">
    <property type="entry name" value="L28p-like"/>
    <property type="match status" value="1"/>
</dbReference>
<dbReference type="PROSITE" id="PS01143">
    <property type="entry name" value="RIBOSOMAL_L31"/>
    <property type="match status" value="1"/>
</dbReference>
<evidence type="ECO:0000255" key="1">
    <source>
        <dbReference type="HAMAP-Rule" id="MF_00502"/>
    </source>
</evidence>
<evidence type="ECO:0000305" key="2"/>
<comment type="subunit">
    <text evidence="1">Part of the 50S ribosomal subunit.</text>
</comment>
<comment type="similarity">
    <text evidence="1">Belongs to the bacterial ribosomal protein bL31 family. Type B subfamily.</text>
</comment>
<gene>
    <name evidence="1" type="primary">rpmE2</name>
    <name type="ordered locus">Xfasm12_0873</name>
</gene>
<reference key="1">
    <citation type="journal article" date="2010" name="J. Bacteriol.">
        <title>Whole genome sequences of two Xylella fastidiosa strains (M12 and M23) causing almond leaf scorch disease in California.</title>
        <authorList>
            <person name="Chen J."/>
            <person name="Xie G."/>
            <person name="Han S."/>
            <person name="Chertkov O."/>
            <person name="Sims D."/>
            <person name="Civerolo E.L."/>
        </authorList>
    </citation>
    <scope>NUCLEOTIDE SEQUENCE [LARGE SCALE GENOMIC DNA]</scope>
    <source>
        <strain>M12</strain>
    </source>
</reference>
<organism>
    <name type="scientific">Xylella fastidiosa (strain M12)</name>
    <dbReference type="NCBI Taxonomy" id="405440"/>
    <lineage>
        <taxon>Bacteria</taxon>
        <taxon>Pseudomonadati</taxon>
        <taxon>Pseudomonadota</taxon>
        <taxon>Gammaproteobacteria</taxon>
        <taxon>Lysobacterales</taxon>
        <taxon>Lysobacteraceae</taxon>
        <taxon>Xylella</taxon>
    </lineage>
</organism>
<protein>
    <recommendedName>
        <fullName evidence="1">Large ribosomal subunit protein bL31B</fullName>
    </recommendedName>
    <alternativeName>
        <fullName evidence="2">50S ribosomal protein L31 type B</fullName>
    </alternativeName>
</protein>
<proteinExistence type="inferred from homology"/>
<keyword id="KW-0687">Ribonucleoprotein</keyword>
<keyword id="KW-0689">Ribosomal protein</keyword>
<accession>B0U6Z3</accession>
<name>RL31B_XYLFM</name>